<name>YC12_KLEPN</name>
<feature type="chain" id="PRO_0000066162" description="Uncharacterized 65.4 kDa protein in cps region">
    <location>
        <begin position="1"/>
        <end position="579"/>
    </location>
</feature>
<accession>Q48458</accession>
<sequence length="579" mass="65386">MKLHMSKTYFLKKLIPSLTLFPVLTSYASSNKDVIESPQSKRYTIESIKQYISLFIGECVFISGQEATQDDSFFYSGYFVSIPVIADELIDNVIYIRGKNCTWKRKIDDFIDVSWFGAIGDGINDDSNAISRANIAAHNECLPLKFIPGHIYQVKNTYEIDVSKTSWFSSDLSTLKWFNDFNADFAIRLFSSQKDYSKRFQNVKVAIKSIAIIGAGIKNLLDSCAIKIGGDERNSSLFTIDSVSIQGWRTTLAFDNNSWRIKFCDCHFLWGNIIAPPGNKNSGECMVFDNCMFADNRSYTELHYGDWFFSKCSFDNHEVKLFGDANVFINQSHMENPGRKTTDFTIVSINSINSFASVIDSFIFISPTPKIINTPLFYVISDNENGLYVRNLRFQATENYNPSKGTENALVLVGGDGKSYLENVRVSLNNKSYLALNKNDSSVLMNSRFKDGLRYWDFNDGVSLQARISSNDSETIVFSKNGASLSQSVLVKSTGILSGGMMLKIVSGDLKLTLECYDSLDNNITTREWNCSASDYSDWSWVRFGEKLPDNIRKIKFYCKSFGQSVDVKLSTILMDIIS</sequence>
<organism>
    <name type="scientific">Klebsiella pneumoniae</name>
    <dbReference type="NCBI Taxonomy" id="573"/>
    <lineage>
        <taxon>Bacteria</taxon>
        <taxon>Pseudomonadati</taxon>
        <taxon>Pseudomonadota</taxon>
        <taxon>Gammaproteobacteria</taxon>
        <taxon>Enterobacterales</taxon>
        <taxon>Enterobacteriaceae</taxon>
        <taxon>Klebsiella/Raoultella group</taxon>
        <taxon>Klebsiella</taxon>
        <taxon>Klebsiella pneumoniae complex</taxon>
    </lineage>
</organism>
<protein>
    <recommendedName>
        <fullName>Uncharacterized 65.4 kDa protein in cps region</fullName>
    </recommendedName>
    <alternativeName>
        <fullName>ORF12</fullName>
    </alternativeName>
</protein>
<reference key="1">
    <citation type="journal article" date="1995" name="J. Bacteriol.">
        <title>Genomic organization of the Klebsiella pneumoniae cps region responsible for serotype K2 capsular polysaccharide synthesis in the virulent strain Chedid.</title>
        <authorList>
            <person name="Arakawa Y."/>
            <person name="Wacharotayankun R."/>
            <person name="Nagatsuka T."/>
            <person name="Ito H."/>
            <person name="Kato N."/>
            <person name="Ohta M."/>
        </authorList>
    </citation>
    <scope>NUCLEOTIDE SEQUENCE [GENOMIC DNA]</scope>
    <source>
        <strain>Chedid</strain>
    </source>
</reference>
<dbReference type="EMBL" id="D21242">
    <property type="protein sequence ID" value="BAA04783.1"/>
    <property type="molecule type" value="Genomic_DNA"/>
</dbReference>
<dbReference type="SMR" id="Q48458"/>
<dbReference type="Gene3D" id="2.160.20.10">
    <property type="entry name" value="Single-stranded right-handed beta-helix, Pectin lyase-like"/>
    <property type="match status" value="1"/>
</dbReference>
<dbReference type="InterPro" id="IPR012334">
    <property type="entry name" value="Pectin_lyas_fold"/>
</dbReference>
<dbReference type="InterPro" id="IPR011050">
    <property type="entry name" value="Pectin_lyase_fold/virulence"/>
</dbReference>
<dbReference type="SUPFAM" id="SSF51126">
    <property type="entry name" value="Pectin lyase-like"/>
    <property type="match status" value="1"/>
</dbReference>
<proteinExistence type="predicted"/>